<protein>
    <recommendedName>
        <fullName evidence="1">1,4-alpha-glucan branching enzyme GlgB</fullName>
        <ecNumber evidence="1">2.4.1.18</ecNumber>
    </recommendedName>
    <alternativeName>
        <fullName evidence="1">1,4-alpha-D-glucan:1,4-alpha-D-glucan 6-glucosyl-transferase</fullName>
    </alternativeName>
    <alternativeName>
        <fullName evidence="1">Alpha-(1-&gt;4)-glucan branching enzyme</fullName>
    </alternativeName>
    <alternativeName>
        <fullName evidence="1">Glycogen branching enzyme</fullName>
        <shortName evidence="1">BE</shortName>
    </alternativeName>
</protein>
<gene>
    <name evidence="1" type="primary">glgB</name>
    <name type="ordered locus">RPA3644</name>
</gene>
<accession>Q6N3P9</accession>
<feature type="chain" id="PRO_0000188738" description="1,4-alpha-glucan branching enzyme GlgB">
    <location>
        <begin position="1"/>
        <end position="716"/>
    </location>
</feature>
<feature type="active site" description="Nucleophile" evidence="1">
    <location>
        <position position="399"/>
    </location>
</feature>
<feature type="active site" description="Proton donor" evidence="1">
    <location>
        <position position="452"/>
    </location>
</feature>
<proteinExistence type="inferred from homology"/>
<organism>
    <name type="scientific">Rhodopseudomonas palustris (strain ATCC BAA-98 / CGA009)</name>
    <dbReference type="NCBI Taxonomy" id="258594"/>
    <lineage>
        <taxon>Bacteria</taxon>
        <taxon>Pseudomonadati</taxon>
        <taxon>Pseudomonadota</taxon>
        <taxon>Alphaproteobacteria</taxon>
        <taxon>Hyphomicrobiales</taxon>
        <taxon>Nitrobacteraceae</taxon>
        <taxon>Rhodopseudomonas</taxon>
    </lineage>
</organism>
<keyword id="KW-0119">Carbohydrate metabolism</keyword>
<keyword id="KW-0320">Glycogen biosynthesis</keyword>
<keyword id="KW-0321">Glycogen metabolism</keyword>
<keyword id="KW-0328">Glycosyltransferase</keyword>
<keyword id="KW-0808">Transferase</keyword>
<sequence>MTVQLSDEAYAVVEGRHADPFRYLGAHPEDGGTMVRVLLPDAVAVEVIGDNGDVAPLDQAHPAGLFVGPLPGASPRYTLRARFGDTTVELQDPYRFPPILSDFDLYLLGEGTDQRLYDKLGAHPMELEGVAGVGFVVLAPNARRVSVVGDFNFWNPLRHQMRVRGSGYWELFVPGARAGDHYKFDLAGPNGEQLPQKADPLAFAAELRPKTASIVVDATTLPRPRPAPENINALSAPMSIYEVHLGSWRRKEGDQWLTYRELAEQLPAYVRDMGFTHVEFLPVSEHPFDGSWGYQPTGLYAPTSRFGSPEDFCALVDACHAAGIGVILDWVPGHFPDDPHGLGNFDGTALYEHANPMQGRHLDWGTLIYNYGRTEVVNFLTANALFWLERYGIDGLRVDAVASMLYLDYSRPAGGWIPNKFGGRENIEAIDFIRRFNTEVYGKFPHSTTAAEESTAWPQVSRPIEFGGLGFGYKWNMGWMHDTLNYISKDPIHRKYHHGQILFGLHYAFSENFILPLSHDEVVHGKRSILGRMPGDEWQRFANLRAYYAFMFGHPGKKLLFMGSEFGQEREWSHDRSLDWHLLEYPKYSGIQALLRDLNKLYRSLPALHQLDCDPFGFEWLITEDANRNLFAWMRKGNDTRARCLVIVNFSPNVYQDYRVRVPFPGRWREVFNSDSAGYGGTNVGNGGEVRTLEGLVPELSLTIPPLAAIFLTPED</sequence>
<reference key="1">
    <citation type="journal article" date="2004" name="Nat. Biotechnol.">
        <title>Complete genome sequence of the metabolically versatile photosynthetic bacterium Rhodopseudomonas palustris.</title>
        <authorList>
            <person name="Larimer F.W."/>
            <person name="Chain P."/>
            <person name="Hauser L."/>
            <person name="Lamerdin J.E."/>
            <person name="Malfatti S."/>
            <person name="Do L."/>
            <person name="Land M.L."/>
            <person name="Pelletier D.A."/>
            <person name="Beatty J.T."/>
            <person name="Lang A.S."/>
            <person name="Tabita F.R."/>
            <person name="Gibson J.L."/>
            <person name="Hanson T.E."/>
            <person name="Bobst C."/>
            <person name="Torres y Torres J.L."/>
            <person name="Peres C."/>
            <person name="Harrison F.H."/>
            <person name="Gibson J."/>
            <person name="Harwood C.S."/>
        </authorList>
    </citation>
    <scope>NUCLEOTIDE SEQUENCE [LARGE SCALE GENOMIC DNA]</scope>
    <source>
        <strain>ATCC BAA-98 / CGA009</strain>
    </source>
</reference>
<name>GLGB_RHOPA</name>
<dbReference type="EC" id="2.4.1.18" evidence="1"/>
<dbReference type="EMBL" id="BX572604">
    <property type="protein sequence ID" value="CAE29085.1"/>
    <property type="molecule type" value="Genomic_DNA"/>
</dbReference>
<dbReference type="RefSeq" id="WP_011159183.1">
    <property type="nucleotide sequence ID" value="NZ_CP116810.1"/>
</dbReference>
<dbReference type="SMR" id="Q6N3P9"/>
<dbReference type="STRING" id="258594.RPA3644"/>
<dbReference type="CAZy" id="CBM48">
    <property type="family name" value="Carbohydrate-Binding Module Family 48"/>
</dbReference>
<dbReference type="CAZy" id="GH13">
    <property type="family name" value="Glycoside Hydrolase Family 13"/>
</dbReference>
<dbReference type="GeneID" id="66894749"/>
<dbReference type="eggNOG" id="COG0296">
    <property type="taxonomic scope" value="Bacteria"/>
</dbReference>
<dbReference type="HOGENOM" id="CLU_004245_3_2_5"/>
<dbReference type="PhylomeDB" id="Q6N3P9"/>
<dbReference type="UniPathway" id="UPA00164"/>
<dbReference type="GO" id="GO:0005829">
    <property type="term" value="C:cytosol"/>
    <property type="evidence" value="ECO:0007669"/>
    <property type="project" value="TreeGrafter"/>
</dbReference>
<dbReference type="GO" id="GO:0003844">
    <property type="term" value="F:1,4-alpha-glucan branching enzyme activity"/>
    <property type="evidence" value="ECO:0007669"/>
    <property type="project" value="UniProtKB-UniRule"/>
</dbReference>
<dbReference type="GO" id="GO:0043169">
    <property type="term" value="F:cation binding"/>
    <property type="evidence" value="ECO:0007669"/>
    <property type="project" value="InterPro"/>
</dbReference>
<dbReference type="GO" id="GO:0004553">
    <property type="term" value="F:hydrolase activity, hydrolyzing O-glycosyl compounds"/>
    <property type="evidence" value="ECO:0007669"/>
    <property type="project" value="InterPro"/>
</dbReference>
<dbReference type="GO" id="GO:0005978">
    <property type="term" value="P:glycogen biosynthetic process"/>
    <property type="evidence" value="ECO:0007669"/>
    <property type="project" value="UniProtKB-UniRule"/>
</dbReference>
<dbReference type="CDD" id="cd11322">
    <property type="entry name" value="AmyAc_Glg_BE"/>
    <property type="match status" value="1"/>
</dbReference>
<dbReference type="CDD" id="cd02855">
    <property type="entry name" value="E_set_GBE_prok_N"/>
    <property type="match status" value="1"/>
</dbReference>
<dbReference type="FunFam" id="2.60.40.10:FF:000169">
    <property type="entry name" value="1,4-alpha-glucan branching enzyme GlgB"/>
    <property type="match status" value="1"/>
</dbReference>
<dbReference type="FunFam" id="2.60.40.1180:FF:000002">
    <property type="entry name" value="1,4-alpha-glucan branching enzyme GlgB"/>
    <property type="match status" value="1"/>
</dbReference>
<dbReference type="FunFam" id="3.20.20.80:FF:000003">
    <property type="entry name" value="1,4-alpha-glucan branching enzyme GlgB"/>
    <property type="match status" value="1"/>
</dbReference>
<dbReference type="Gene3D" id="3.20.20.80">
    <property type="entry name" value="Glycosidases"/>
    <property type="match status" value="1"/>
</dbReference>
<dbReference type="Gene3D" id="2.60.40.1180">
    <property type="entry name" value="Golgi alpha-mannosidase II"/>
    <property type="match status" value="1"/>
</dbReference>
<dbReference type="Gene3D" id="2.60.40.10">
    <property type="entry name" value="Immunoglobulins"/>
    <property type="match status" value="2"/>
</dbReference>
<dbReference type="HAMAP" id="MF_00685">
    <property type="entry name" value="GlgB"/>
    <property type="match status" value="1"/>
</dbReference>
<dbReference type="InterPro" id="IPR006048">
    <property type="entry name" value="A-amylase/branching_C"/>
</dbReference>
<dbReference type="InterPro" id="IPR037439">
    <property type="entry name" value="Branching_enzy"/>
</dbReference>
<dbReference type="InterPro" id="IPR006407">
    <property type="entry name" value="GlgB"/>
</dbReference>
<dbReference type="InterPro" id="IPR054169">
    <property type="entry name" value="GlgB_N"/>
</dbReference>
<dbReference type="InterPro" id="IPR044143">
    <property type="entry name" value="GlgB_N_E_set_prok"/>
</dbReference>
<dbReference type="InterPro" id="IPR006047">
    <property type="entry name" value="Glyco_hydro_13_cat_dom"/>
</dbReference>
<dbReference type="InterPro" id="IPR004193">
    <property type="entry name" value="Glyco_hydro_13_N"/>
</dbReference>
<dbReference type="InterPro" id="IPR013780">
    <property type="entry name" value="Glyco_hydro_b"/>
</dbReference>
<dbReference type="InterPro" id="IPR017853">
    <property type="entry name" value="Glycoside_hydrolase_SF"/>
</dbReference>
<dbReference type="InterPro" id="IPR013783">
    <property type="entry name" value="Ig-like_fold"/>
</dbReference>
<dbReference type="InterPro" id="IPR014756">
    <property type="entry name" value="Ig_E-set"/>
</dbReference>
<dbReference type="NCBIfam" id="TIGR01515">
    <property type="entry name" value="branching_enzym"/>
    <property type="match status" value="1"/>
</dbReference>
<dbReference type="NCBIfam" id="NF003811">
    <property type="entry name" value="PRK05402.1"/>
    <property type="match status" value="1"/>
</dbReference>
<dbReference type="NCBIfam" id="NF008967">
    <property type="entry name" value="PRK12313.1"/>
    <property type="match status" value="1"/>
</dbReference>
<dbReference type="PANTHER" id="PTHR43651">
    <property type="entry name" value="1,4-ALPHA-GLUCAN-BRANCHING ENZYME"/>
    <property type="match status" value="1"/>
</dbReference>
<dbReference type="PANTHER" id="PTHR43651:SF3">
    <property type="entry name" value="1,4-ALPHA-GLUCAN-BRANCHING ENZYME"/>
    <property type="match status" value="1"/>
</dbReference>
<dbReference type="Pfam" id="PF00128">
    <property type="entry name" value="Alpha-amylase"/>
    <property type="match status" value="1"/>
</dbReference>
<dbReference type="Pfam" id="PF02806">
    <property type="entry name" value="Alpha-amylase_C"/>
    <property type="match status" value="1"/>
</dbReference>
<dbReference type="Pfam" id="PF02922">
    <property type="entry name" value="CBM_48"/>
    <property type="match status" value="1"/>
</dbReference>
<dbReference type="Pfam" id="PF22019">
    <property type="entry name" value="GlgB_N"/>
    <property type="match status" value="1"/>
</dbReference>
<dbReference type="PIRSF" id="PIRSF000463">
    <property type="entry name" value="GlgB"/>
    <property type="match status" value="1"/>
</dbReference>
<dbReference type="SMART" id="SM00642">
    <property type="entry name" value="Aamy"/>
    <property type="match status" value="1"/>
</dbReference>
<dbReference type="SUPFAM" id="SSF51445">
    <property type="entry name" value="(Trans)glycosidases"/>
    <property type="match status" value="1"/>
</dbReference>
<dbReference type="SUPFAM" id="SSF81296">
    <property type="entry name" value="E set domains"/>
    <property type="match status" value="2"/>
</dbReference>
<dbReference type="SUPFAM" id="SSF51011">
    <property type="entry name" value="Glycosyl hydrolase domain"/>
    <property type="match status" value="1"/>
</dbReference>
<evidence type="ECO:0000255" key="1">
    <source>
        <dbReference type="HAMAP-Rule" id="MF_00685"/>
    </source>
</evidence>
<comment type="function">
    <text evidence="1">Catalyzes the formation of the alpha-1,6-glucosidic linkages in glycogen by scission of a 1,4-alpha-linked oligosaccharide from growing alpha-1,4-glucan chains and the subsequent attachment of the oligosaccharide to the alpha-1,6 position.</text>
</comment>
<comment type="catalytic activity">
    <reaction evidence="1">
        <text>Transfers a segment of a (1-&gt;4)-alpha-D-glucan chain to a primary hydroxy group in a similar glucan chain.</text>
        <dbReference type="EC" id="2.4.1.18"/>
    </reaction>
</comment>
<comment type="pathway">
    <text evidence="1">Glycan biosynthesis; glycogen biosynthesis.</text>
</comment>
<comment type="subunit">
    <text evidence="1">Monomer.</text>
</comment>
<comment type="similarity">
    <text evidence="1">Belongs to the glycosyl hydrolase 13 family. GlgB subfamily.</text>
</comment>